<gene>
    <name evidence="1" type="primary">purA</name>
    <name type="ordered locus">PEPE_1247</name>
</gene>
<reference key="1">
    <citation type="journal article" date="2006" name="Proc. Natl. Acad. Sci. U.S.A.">
        <title>Comparative genomics of the lactic acid bacteria.</title>
        <authorList>
            <person name="Makarova K.S."/>
            <person name="Slesarev A."/>
            <person name="Wolf Y.I."/>
            <person name="Sorokin A."/>
            <person name="Mirkin B."/>
            <person name="Koonin E.V."/>
            <person name="Pavlov A."/>
            <person name="Pavlova N."/>
            <person name="Karamychev V."/>
            <person name="Polouchine N."/>
            <person name="Shakhova V."/>
            <person name="Grigoriev I."/>
            <person name="Lou Y."/>
            <person name="Rohksar D."/>
            <person name="Lucas S."/>
            <person name="Huang K."/>
            <person name="Goodstein D.M."/>
            <person name="Hawkins T."/>
            <person name="Plengvidhya V."/>
            <person name="Welker D."/>
            <person name="Hughes J."/>
            <person name="Goh Y."/>
            <person name="Benson A."/>
            <person name="Baldwin K."/>
            <person name="Lee J.-H."/>
            <person name="Diaz-Muniz I."/>
            <person name="Dosti B."/>
            <person name="Smeianov V."/>
            <person name="Wechter W."/>
            <person name="Barabote R."/>
            <person name="Lorca G."/>
            <person name="Altermann E."/>
            <person name="Barrangou R."/>
            <person name="Ganesan B."/>
            <person name="Xie Y."/>
            <person name="Rawsthorne H."/>
            <person name="Tamir D."/>
            <person name="Parker C."/>
            <person name="Breidt F."/>
            <person name="Broadbent J.R."/>
            <person name="Hutkins R."/>
            <person name="O'Sullivan D."/>
            <person name="Steele J."/>
            <person name="Unlu G."/>
            <person name="Saier M.H. Jr."/>
            <person name="Klaenhammer T."/>
            <person name="Richardson P."/>
            <person name="Kozyavkin S."/>
            <person name="Weimer B.C."/>
            <person name="Mills D.A."/>
        </authorList>
    </citation>
    <scope>NUCLEOTIDE SEQUENCE [LARGE SCALE GENOMIC DNA]</scope>
    <source>
        <strain>ATCC 25745 / CCUG 21536 / LMG 10740 / 183-1w</strain>
    </source>
</reference>
<protein>
    <recommendedName>
        <fullName evidence="1">Adenylosuccinate synthetase</fullName>
        <shortName evidence="1">AMPSase</shortName>
        <shortName evidence="1">AdSS</shortName>
        <ecNumber evidence="1">6.3.4.4</ecNumber>
    </recommendedName>
    <alternativeName>
        <fullName evidence="1">IMP--aspartate ligase</fullName>
    </alternativeName>
</protein>
<keyword id="KW-0963">Cytoplasm</keyword>
<keyword id="KW-0342">GTP-binding</keyword>
<keyword id="KW-0436">Ligase</keyword>
<keyword id="KW-0460">Magnesium</keyword>
<keyword id="KW-0479">Metal-binding</keyword>
<keyword id="KW-0547">Nucleotide-binding</keyword>
<keyword id="KW-0658">Purine biosynthesis</keyword>
<comment type="function">
    <text evidence="1">Plays an important role in the de novo pathway of purine nucleotide biosynthesis. Catalyzes the first committed step in the biosynthesis of AMP from IMP.</text>
</comment>
<comment type="catalytic activity">
    <reaction evidence="1">
        <text>IMP + L-aspartate + GTP = N(6)-(1,2-dicarboxyethyl)-AMP + GDP + phosphate + 2 H(+)</text>
        <dbReference type="Rhea" id="RHEA:15753"/>
        <dbReference type="ChEBI" id="CHEBI:15378"/>
        <dbReference type="ChEBI" id="CHEBI:29991"/>
        <dbReference type="ChEBI" id="CHEBI:37565"/>
        <dbReference type="ChEBI" id="CHEBI:43474"/>
        <dbReference type="ChEBI" id="CHEBI:57567"/>
        <dbReference type="ChEBI" id="CHEBI:58053"/>
        <dbReference type="ChEBI" id="CHEBI:58189"/>
        <dbReference type="EC" id="6.3.4.4"/>
    </reaction>
</comment>
<comment type="cofactor">
    <cofactor evidence="1">
        <name>Mg(2+)</name>
        <dbReference type="ChEBI" id="CHEBI:18420"/>
    </cofactor>
    <text evidence="1">Binds 1 Mg(2+) ion per subunit.</text>
</comment>
<comment type="pathway">
    <text evidence="1">Purine metabolism; AMP biosynthesis via de novo pathway; AMP from IMP: step 1/2.</text>
</comment>
<comment type="subunit">
    <text evidence="1">Homodimer.</text>
</comment>
<comment type="subcellular location">
    <subcellularLocation>
        <location evidence="1">Cytoplasm</location>
    </subcellularLocation>
</comment>
<comment type="similarity">
    <text evidence="1">Belongs to the adenylosuccinate synthetase family.</text>
</comment>
<name>PURA_PEDPA</name>
<evidence type="ECO:0000255" key="1">
    <source>
        <dbReference type="HAMAP-Rule" id="MF_00011"/>
    </source>
</evidence>
<evidence type="ECO:0000256" key="2">
    <source>
        <dbReference type="SAM" id="MobiDB-lite"/>
    </source>
</evidence>
<sequence length="431" mass="47723">MTATVVIGSQWGDEGKGKIIDFLGQSADVTVRYSGGDNAGHSLVVNDQKLALRLIPSGILAPNSICIIGNGTVINPATLLDEIKELNGVGVNTDHLKISDRAHIVFPYHILQDQQQERDRSKNGEKIGTTNKGIGPAYMDKMQRIGIRAIDLLDNETLEEKIAFNLEQKKRILDEDLWNQLPSLKELTAQYIEYGEILKDYITDTSYLIHTNLNDNKRVLFEGAQGTMLDIDHGTYPFVTSSNPTAGGAATGAGIGVTKIKHVIGVCKSYVSRVGEGPFPTEQINEVGDRIREIAHEYGTVTKRPRRIGWFDGVLMKYVSEVNGLTDLVVNCLDVLSGFKELKICTGYQTDHGVIKYYPASEKELKNSTPIYETLPGWDEDLTQMTTYEELPANAKNYLKKIEEITGVPVSAFSIGPDREQTIVLNDMWSD</sequence>
<accession>Q03ET4</accession>
<feature type="chain" id="PRO_1000000885" description="Adenylosuccinate synthetase">
    <location>
        <begin position="1"/>
        <end position="431"/>
    </location>
</feature>
<feature type="region of interest" description="Disordered" evidence="2">
    <location>
        <begin position="114"/>
        <end position="133"/>
    </location>
</feature>
<feature type="compositionally biased region" description="Basic and acidic residues" evidence="2">
    <location>
        <begin position="115"/>
        <end position="125"/>
    </location>
</feature>
<feature type="active site" description="Proton acceptor" evidence="1">
    <location>
        <position position="13"/>
    </location>
</feature>
<feature type="active site" description="Proton donor" evidence="1">
    <location>
        <position position="41"/>
    </location>
</feature>
<feature type="binding site" evidence="1">
    <location>
        <begin position="12"/>
        <end position="18"/>
    </location>
    <ligand>
        <name>GTP</name>
        <dbReference type="ChEBI" id="CHEBI:37565"/>
    </ligand>
</feature>
<feature type="binding site" description="in other chain" evidence="1">
    <location>
        <begin position="13"/>
        <end position="16"/>
    </location>
    <ligand>
        <name>IMP</name>
        <dbReference type="ChEBI" id="CHEBI:58053"/>
        <note>ligand shared between dimeric partners</note>
    </ligand>
</feature>
<feature type="binding site" evidence="1">
    <location>
        <position position="13"/>
    </location>
    <ligand>
        <name>Mg(2+)</name>
        <dbReference type="ChEBI" id="CHEBI:18420"/>
    </ligand>
</feature>
<feature type="binding site" description="in other chain" evidence="1">
    <location>
        <begin position="38"/>
        <end position="41"/>
    </location>
    <ligand>
        <name>IMP</name>
        <dbReference type="ChEBI" id="CHEBI:58053"/>
        <note>ligand shared between dimeric partners</note>
    </ligand>
</feature>
<feature type="binding site" evidence="1">
    <location>
        <begin position="40"/>
        <end position="42"/>
    </location>
    <ligand>
        <name>GTP</name>
        <dbReference type="ChEBI" id="CHEBI:37565"/>
    </ligand>
</feature>
<feature type="binding site" evidence="1">
    <location>
        <position position="40"/>
    </location>
    <ligand>
        <name>Mg(2+)</name>
        <dbReference type="ChEBI" id="CHEBI:18420"/>
    </ligand>
</feature>
<feature type="binding site" description="in other chain" evidence="1">
    <location>
        <position position="130"/>
    </location>
    <ligand>
        <name>IMP</name>
        <dbReference type="ChEBI" id="CHEBI:58053"/>
        <note>ligand shared between dimeric partners</note>
    </ligand>
</feature>
<feature type="binding site" evidence="1">
    <location>
        <position position="144"/>
    </location>
    <ligand>
        <name>IMP</name>
        <dbReference type="ChEBI" id="CHEBI:58053"/>
        <note>ligand shared between dimeric partners</note>
    </ligand>
</feature>
<feature type="binding site" description="in other chain" evidence="1">
    <location>
        <position position="225"/>
    </location>
    <ligand>
        <name>IMP</name>
        <dbReference type="ChEBI" id="CHEBI:58053"/>
        <note>ligand shared between dimeric partners</note>
    </ligand>
</feature>
<feature type="binding site" description="in other chain" evidence="1">
    <location>
        <position position="240"/>
    </location>
    <ligand>
        <name>IMP</name>
        <dbReference type="ChEBI" id="CHEBI:58053"/>
        <note>ligand shared between dimeric partners</note>
    </ligand>
</feature>
<feature type="binding site" evidence="1">
    <location>
        <begin position="300"/>
        <end position="306"/>
    </location>
    <ligand>
        <name>substrate</name>
    </ligand>
</feature>
<feature type="binding site" description="in other chain" evidence="1">
    <location>
        <position position="304"/>
    </location>
    <ligand>
        <name>IMP</name>
        <dbReference type="ChEBI" id="CHEBI:58053"/>
        <note>ligand shared between dimeric partners</note>
    </ligand>
</feature>
<feature type="binding site" evidence="1">
    <location>
        <position position="306"/>
    </location>
    <ligand>
        <name>GTP</name>
        <dbReference type="ChEBI" id="CHEBI:37565"/>
    </ligand>
</feature>
<feature type="binding site" evidence="1">
    <location>
        <begin position="332"/>
        <end position="334"/>
    </location>
    <ligand>
        <name>GTP</name>
        <dbReference type="ChEBI" id="CHEBI:37565"/>
    </ligand>
</feature>
<feature type="binding site" evidence="1">
    <location>
        <begin position="414"/>
        <end position="416"/>
    </location>
    <ligand>
        <name>GTP</name>
        <dbReference type="ChEBI" id="CHEBI:37565"/>
    </ligand>
</feature>
<dbReference type="EC" id="6.3.4.4" evidence="1"/>
<dbReference type="EMBL" id="CP000422">
    <property type="protein sequence ID" value="ABJ68288.1"/>
    <property type="molecule type" value="Genomic_DNA"/>
</dbReference>
<dbReference type="RefSeq" id="WP_002834365.1">
    <property type="nucleotide sequence ID" value="NC_008525.1"/>
</dbReference>
<dbReference type="SMR" id="Q03ET4"/>
<dbReference type="STRING" id="278197.PEPE_1247"/>
<dbReference type="GeneID" id="33061853"/>
<dbReference type="KEGG" id="ppe:PEPE_1247"/>
<dbReference type="eggNOG" id="COG0104">
    <property type="taxonomic scope" value="Bacteria"/>
</dbReference>
<dbReference type="HOGENOM" id="CLU_029848_0_0_9"/>
<dbReference type="OrthoDB" id="9807553at2"/>
<dbReference type="UniPathway" id="UPA00075">
    <property type="reaction ID" value="UER00335"/>
</dbReference>
<dbReference type="Proteomes" id="UP000000773">
    <property type="component" value="Chromosome"/>
</dbReference>
<dbReference type="GO" id="GO:0005737">
    <property type="term" value="C:cytoplasm"/>
    <property type="evidence" value="ECO:0007669"/>
    <property type="project" value="UniProtKB-SubCell"/>
</dbReference>
<dbReference type="GO" id="GO:0004019">
    <property type="term" value="F:adenylosuccinate synthase activity"/>
    <property type="evidence" value="ECO:0007669"/>
    <property type="project" value="UniProtKB-UniRule"/>
</dbReference>
<dbReference type="GO" id="GO:0005525">
    <property type="term" value="F:GTP binding"/>
    <property type="evidence" value="ECO:0007669"/>
    <property type="project" value="UniProtKB-UniRule"/>
</dbReference>
<dbReference type="GO" id="GO:0000287">
    <property type="term" value="F:magnesium ion binding"/>
    <property type="evidence" value="ECO:0007669"/>
    <property type="project" value="UniProtKB-UniRule"/>
</dbReference>
<dbReference type="GO" id="GO:0044208">
    <property type="term" value="P:'de novo' AMP biosynthetic process"/>
    <property type="evidence" value="ECO:0007669"/>
    <property type="project" value="UniProtKB-UniRule"/>
</dbReference>
<dbReference type="GO" id="GO:0046040">
    <property type="term" value="P:IMP metabolic process"/>
    <property type="evidence" value="ECO:0007669"/>
    <property type="project" value="TreeGrafter"/>
</dbReference>
<dbReference type="CDD" id="cd03108">
    <property type="entry name" value="AdSS"/>
    <property type="match status" value="1"/>
</dbReference>
<dbReference type="FunFam" id="1.10.300.10:FF:000001">
    <property type="entry name" value="Adenylosuccinate synthetase"/>
    <property type="match status" value="1"/>
</dbReference>
<dbReference type="FunFam" id="3.90.170.10:FF:000001">
    <property type="entry name" value="Adenylosuccinate synthetase"/>
    <property type="match status" value="1"/>
</dbReference>
<dbReference type="Gene3D" id="3.40.440.10">
    <property type="entry name" value="Adenylosuccinate Synthetase, subunit A, domain 1"/>
    <property type="match status" value="1"/>
</dbReference>
<dbReference type="Gene3D" id="1.10.300.10">
    <property type="entry name" value="Adenylosuccinate Synthetase, subunit A, domain 2"/>
    <property type="match status" value="1"/>
</dbReference>
<dbReference type="Gene3D" id="3.90.170.10">
    <property type="entry name" value="Adenylosuccinate Synthetase, subunit A, domain 3"/>
    <property type="match status" value="1"/>
</dbReference>
<dbReference type="HAMAP" id="MF_00011">
    <property type="entry name" value="Adenylosucc_synth"/>
    <property type="match status" value="1"/>
</dbReference>
<dbReference type="InterPro" id="IPR018220">
    <property type="entry name" value="Adenylosuccin_syn_GTP-bd"/>
</dbReference>
<dbReference type="InterPro" id="IPR033128">
    <property type="entry name" value="Adenylosuccin_syn_Lys_AS"/>
</dbReference>
<dbReference type="InterPro" id="IPR042109">
    <property type="entry name" value="Adenylosuccinate_synth_dom1"/>
</dbReference>
<dbReference type="InterPro" id="IPR042110">
    <property type="entry name" value="Adenylosuccinate_synth_dom2"/>
</dbReference>
<dbReference type="InterPro" id="IPR042111">
    <property type="entry name" value="Adenylosuccinate_synth_dom3"/>
</dbReference>
<dbReference type="InterPro" id="IPR001114">
    <property type="entry name" value="Adenylosuccinate_synthetase"/>
</dbReference>
<dbReference type="InterPro" id="IPR027417">
    <property type="entry name" value="P-loop_NTPase"/>
</dbReference>
<dbReference type="NCBIfam" id="NF002223">
    <property type="entry name" value="PRK01117.1"/>
    <property type="match status" value="1"/>
</dbReference>
<dbReference type="NCBIfam" id="TIGR00184">
    <property type="entry name" value="purA"/>
    <property type="match status" value="1"/>
</dbReference>
<dbReference type="PANTHER" id="PTHR11846">
    <property type="entry name" value="ADENYLOSUCCINATE SYNTHETASE"/>
    <property type="match status" value="1"/>
</dbReference>
<dbReference type="PANTHER" id="PTHR11846:SF0">
    <property type="entry name" value="ADENYLOSUCCINATE SYNTHETASE"/>
    <property type="match status" value="1"/>
</dbReference>
<dbReference type="Pfam" id="PF00709">
    <property type="entry name" value="Adenylsucc_synt"/>
    <property type="match status" value="1"/>
</dbReference>
<dbReference type="SMART" id="SM00788">
    <property type="entry name" value="Adenylsucc_synt"/>
    <property type="match status" value="1"/>
</dbReference>
<dbReference type="SUPFAM" id="SSF52540">
    <property type="entry name" value="P-loop containing nucleoside triphosphate hydrolases"/>
    <property type="match status" value="1"/>
</dbReference>
<dbReference type="PROSITE" id="PS01266">
    <property type="entry name" value="ADENYLOSUCCIN_SYN_1"/>
    <property type="match status" value="1"/>
</dbReference>
<dbReference type="PROSITE" id="PS00513">
    <property type="entry name" value="ADENYLOSUCCIN_SYN_2"/>
    <property type="match status" value="1"/>
</dbReference>
<organism>
    <name type="scientific">Pediococcus pentosaceus (strain ATCC 25745 / CCUG 21536 / LMG 10740 / 183-1w)</name>
    <dbReference type="NCBI Taxonomy" id="278197"/>
    <lineage>
        <taxon>Bacteria</taxon>
        <taxon>Bacillati</taxon>
        <taxon>Bacillota</taxon>
        <taxon>Bacilli</taxon>
        <taxon>Lactobacillales</taxon>
        <taxon>Lactobacillaceae</taxon>
        <taxon>Pediococcus</taxon>
    </lineage>
</organism>
<proteinExistence type="inferred from homology"/>